<dbReference type="EMBL" id="CP000422">
    <property type="protein sequence ID" value="ABJ68303.1"/>
    <property type="molecule type" value="Genomic_DNA"/>
</dbReference>
<dbReference type="SMR" id="Q03ER9"/>
<dbReference type="STRING" id="278197.PEPE_1262"/>
<dbReference type="KEGG" id="ppe:PEPE_1262"/>
<dbReference type="eggNOG" id="COG4472">
    <property type="taxonomic scope" value="Bacteria"/>
</dbReference>
<dbReference type="HOGENOM" id="CLU_162466_0_0_9"/>
<dbReference type="OrthoDB" id="9796303at2"/>
<dbReference type="Proteomes" id="UP000000773">
    <property type="component" value="Chromosome"/>
</dbReference>
<dbReference type="HAMAP" id="MF_01507">
    <property type="entry name" value="UPF0297"/>
    <property type="match status" value="1"/>
</dbReference>
<dbReference type="InterPro" id="IPR009309">
    <property type="entry name" value="IreB"/>
</dbReference>
<dbReference type="NCBIfam" id="NF003997">
    <property type="entry name" value="PRK05473.1"/>
    <property type="match status" value="1"/>
</dbReference>
<dbReference type="PANTHER" id="PTHR40067">
    <property type="entry name" value="UPF0297 PROTEIN YRZL"/>
    <property type="match status" value="1"/>
</dbReference>
<dbReference type="PANTHER" id="PTHR40067:SF1">
    <property type="entry name" value="UPF0297 PROTEIN YRZL"/>
    <property type="match status" value="1"/>
</dbReference>
<dbReference type="Pfam" id="PF06135">
    <property type="entry name" value="IreB"/>
    <property type="match status" value="1"/>
</dbReference>
<dbReference type="PIRSF" id="PIRSF037258">
    <property type="entry name" value="DUF965_bac"/>
    <property type="match status" value="1"/>
</dbReference>
<evidence type="ECO:0000255" key="1">
    <source>
        <dbReference type="HAMAP-Rule" id="MF_01507"/>
    </source>
</evidence>
<name>Y1262_PEDPA</name>
<feature type="chain" id="PRO_0000289310" description="UPF0297 protein PEPE_1262">
    <location>
        <begin position="1"/>
        <end position="93"/>
    </location>
</feature>
<reference key="1">
    <citation type="journal article" date="2006" name="Proc. Natl. Acad. Sci. U.S.A.">
        <title>Comparative genomics of the lactic acid bacteria.</title>
        <authorList>
            <person name="Makarova K.S."/>
            <person name="Slesarev A."/>
            <person name="Wolf Y.I."/>
            <person name="Sorokin A."/>
            <person name="Mirkin B."/>
            <person name="Koonin E.V."/>
            <person name="Pavlov A."/>
            <person name="Pavlova N."/>
            <person name="Karamychev V."/>
            <person name="Polouchine N."/>
            <person name="Shakhova V."/>
            <person name="Grigoriev I."/>
            <person name="Lou Y."/>
            <person name="Rohksar D."/>
            <person name="Lucas S."/>
            <person name="Huang K."/>
            <person name="Goodstein D.M."/>
            <person name="Hawkins T."/>
            <person name="Plengvidhya V."/>
            <person name="Welker D."/>
            <person name="Hughes J."/>
            <person name="Goh Y."/>
            <person name="Benson A."/>
            <person name="Baldwin K."/>
            <person name="Lee J.-H."/>
            <person name="Diaz-Muniz I."/>
            <person name="Dosti B."/>
            <person name="Smeianov V."/>
            <person name="Wechter W."/>
            <person name="Barabote R."/>
            <person name="Lorca G."/>
            <person name="Altermann E."/>
            <person name="Barrangou R."/>
            <person name="Ganesan B."/>
            <person name="Xie Y."/>
            <person name="Rawsthorne H."/>
            <person name="Tamir D."/>
            <person name="Parker C."/>
            <person name="Breidt F."/>
            <person name="Broadbent J.R."/>
            <person name="Hutkins R."/>
            <person name="O'Sullivan D."/>
            <person name="Steele J."/>
            <person name="Unlu G."/>
            <person name="Saier M.H. Jr."/>
            <person name="Klaenhammer T."/>
            <person name="Richardson P."/>
            <person name="Kozyavkin S."/>
            <person name="Weimer B.C."/>
            <person name="Mills D.A."/>
        </authorList>
    </citation>
    <scope>NUCLEOTIDE SEQUENCE [LARGE SCALE GENOMIC DNA]</scope>
    <source>
        <strain>ATCC 25745 / CCUG 21536 / LMG 10740 / 183-1w</strain>
    </source>
</reference>
<proteinExistence type="inferred from homology"/>
<comment type="similarity">
    <text evidence="1">Belongs to the UPF0297 family.</text>
</comment>
<organism>
    <name type="scientific">Pediococcus pentosaceus (strain ATCC 25745 / CCUG 21536 / LMG 10740 / 183-1w)</name>
    <dbReference type="NCBI Taxonomy" id="278197"/>
    <lineage>
        <taxon>Bacteria</taxon>
        <taxon>Bacillati</taxon>
        <taxon>Bacillota</taxon>
        <taxon>Bacilli</taxon>
        <taxon>Lactobacillales</taxon>
        <taxon>Lactobacillaceae</taxon>
        <taxon>Pediococcus</taxon>
    </lineage>
</organism>
<accession>Q03ER9</accession>
<sequence length="93" mass="10944">MGKLDETMFFDFGDNKQNDVRETLKTVYDALEEKGYNPIDQIVGYLISGDPAYIPRLNDARNLIRKHQRDEIIEELVRYYLSEQIADSKKEEN</sequence>
<protein>
    <recommendedName>
        <fullName evidence="1">UPF0297 protein PEPE_1262</fullName>
    </recommendedName>
</protein>
<gene>
    <name type="ordered locus">PEPE_1262</name>
</gene>